<evidence type="ECO:0000250" key="1"/>
<evidence type="ECO:0000255" key="2">
    <source>
        <dbReference type="PROSITE-ProRule" id="PRU00560"/>
    </source>
</evidence>
<evidence type="ECO:0000255" key="3">
    <source>
        <dbReference type="PROSITE-ProRule" id="PRU00617"/>
    </source>
</evidence>
<evidence type="ECO:0000256" key="4">
    <source>
        <dbReference type="SAM" id="MobiDB-lite"/>
    </source>
</evidence>
<evidence type="ECO:0000305" key="5"/>
<comment type="function">
    <text evidence="1">Essential helicase.</text>
</comment>
<comment type="catalytic activity">
    <reaction>
        <text>Couples ATP hydrolysis with the unwinding of duplex DNA by translocating in the 3'-5' direction.</text>
        <dbReference type="EC" id="5.6.2.4"/>
    </reaction>
</comment>
<comment type="catalytic activity">
    <reaction>
        <text>ATP + H2O = ADP + phosphate + H(+)</text>
        <dbReference type="Rhea" id="RHEA:13065"/>
        <dbReference type="ChEBI" id="CHEBI:15377"/>
        <dbReference type="ChEBI" id="CHEBI:15378"/>
        <dbReference type="ChEBI" id="CHEBI:30616"/>
        <dbReference type="ChEBI" id="CHEBI:43474"/>
        <dbReference type="ChEBI" id="CHEBI:456216"/>
        <dbReference type="EC" id="5.6.2.4"/>
    </reaction>
</comment>
<comment type="similarity">
    <text evidence="5">Belongs to the helicase family. UvrD subfamily.</text>
</comment>
<organism>
    <name type="scientific">Staphylococcus epidermidis (strain ATCC 12228 / FDA PCI 1200)</name>
    <dbReference type="NCBI Taxonomy" id="176280"/>
    <lineage>
        <taxon>Bacteria</taxon>
        <taxon>Bacillati</taxon>
        <taxon>Bacillota</taxon>
        <taxon>Bacilli</taxon>
        <taxon>Bacillales</taxon>
        <taxon>Staphylococcaceae</taxon>
        <taxon>Staphylococcus</taxon>
    </lineage>
</organism>
<protein>
    <recommendedName>
        <fullName>ATP-dependent DNA helicase PcrA</fullName>
        <ecNumber>5.6.2.4</ecNumber>
    </recommendedName>
    <alternativeName>
        <fullName evidence="5">DNA 3'-5' helicase PcrA</fullName>
    </alternativeName>
</protein>
<accession>Q8CRT9</accession>
<name>PCRA_STAES</name>
<keyword id="KW-0067">ATP-binding</keyword>
<keyword id="KW-0238">DNA-binding</keyword>
<keyword id="KW-0347">Helicase</keyword>
<keyword id="KW-0378">Hydrolase</keyword>
<keyword id="KW-0413">Isomerase</keyword>
<keyword id="KW-0547">Nucleotide-binding</keyword>
<sequence>MNALVKNMNSEQSEAVRTTEGPLLIMAGAGSGKTRVLTHRIAYLLDEKDVSPYNILAITFTNKAAKEMKARVEHLVGEEAQVIWMSTFHSMCVRILRRDADRIGIERNFTIIDPTDQKSVIKDVLKSENIDSKRFEPRMFIGAISNLKNELKTPEDAQKEANDFHSQMVATVYKGYQRQLSRNEALDFDDLIMTTINLFERVPETLEYYQNKFQYIHVDEYQDTNKAQYTLVKLLANKFKNLCVVGDSDQSIYGWRGADIQNILSFEEDYPEAKTIFLEQNYRSTKNILNAANEVIKHNSERKPKGLWTANSGGDKIQYYEAMTERDEAEYVVKEIMKHQRSGKKYSEMAILYRTNAQSRVLEETFMKSNIPYTMVGGQKFYDRKEIKDLLSYLRVIANSNDDISLQRIINVPKRGIGPSSVEKIQTYALQNNISMFDALAEVDFIGLSKKVTQECISFYEMIQNLIKEQEFLEISEIVDEVLQKSGYRDMLDREQSIESRSRLENLDEFMSVPKDYEENTPLEEQSLINFLTDLSLVADIDEADTQNGVTLMTMHSAKGLEFPIVFIMGMEESLFPHIRAIKSEDDHEMEEERRICYVAITRAEELLYITNATTRMLFGRSQSNMPSRFLKEIPEDLLDSHTGQKRQTISPKSQPKRGFSKRTTSTKKQVSSSDWKVGDKVMHKAWGEGMVSNVNEKNGSVELDIIFKSEGPKRLLAQFAPITKKEDS</sequence>
<proteinExistence type="inferred from homology"/>
<feature type="chain" id="PRO_0000102063" description="ATP-dependent DNA helicase PcrA">
    <location>
        <begin position="1"/>
        <end position="729"/>
    </location>
</feature>
<feature type="domain" description="UvrD-like helicase ATP-binding" evidence="2">
    <location>
        <begin position="6"/>
        <end position="285"/>
    </location>
</feature>
<feature type="domain" description="UvrD-like helicase C-terminal" evidence="3">
    <location>
        <begin position="286"/>
        <end position="560"/>
    </location>
</feature>
<feature type="region of interest" description="Disordered" evidence="4">
    <location>
        <begin position="641"/>
        <end position="677"/>
    </location>
</feature>
<feature type="compositionally biased region" description="Polar residues" evidence="4">
    <location>
        <begin position="662"/>
        <end position="675"/>
    </location>
</feature>
<feature type="binding site" evidence="2">
    <location>
        <begin position="30"/>
        <end position="35"/>
    </location>
    <ligand>
        <name>ATP</name>
        <dbReference type="ChEBI" id="CHEBI:30616"/>
    </ligand>
</feature>
<feature type="binding site" evidence="1">
    <location>
        <position position="283"/>
    </location>
    <ligand>
        <name>ATP</name>
        <dbReference type="ChEBI" id="CHEBI:30616"/>
    </ligand>
</feature>
<gene>
    <name type="primary">pcrA</name>
    <name type="ordered locus">SE_1590</name>
</gene>
<reference key="1">
    <citation type="journal article" date="2003" name="Mol. Microbiol.">
        <title>Genome-based analysis of virulence genes in a non-biofilm-forming Staphylococcus epidermidis strain (ATCC 12228).</title>
        <authorList>
            <person name="Zhang Y.-Q."/>
            <person name="Ren S.-X."/>
            <person name="Li H.-L."/>
            <person name="Wang Y.-X."/>
            <person name="Fu G."/>
            <person name="Yang J."/>
            <person name="Qin Z.-Q."/>
            <person name="Miao Y.-G."/>
            <person name="Wang W.-Y."/>
            <person name="Chen R.-S."/>
            <person name="Shen Y."/>
            <person name="Chen Z."/>
            <person name="Yuan Z.-H."/>
            <person name="Zhao G.-P."/>
            <person name="Qu D."/>
            <person name="Danchin A."/>
            <person name="Wen Y.-M."/>
        </authorList>
    </citation>
    <scope>NUCLEOTIDE SEQUENCE [LARGE SCALE GENOMIC DNA]</scope>
    <source>
        <strain>ATCC 12228 / FDA PCI 1200</strain>
    </source>
</reference>
<dbReference type="EC" id="5.6.2.4"/>
<dbReference type="EMBL" id="AE015929">
    <property type="protein sequence ID" value="AAO05189.1"/>
    <property type="molecule type" value="Genomic_DNA"/>
</dbReference>
<dbReference type="RefSeq" id="NP_765145.1">
    <property type="nucleotide sequence ID" value="NC_004461.1"/>
</dbReference>
<dbReference type="RefSeq" id="WP_002457083.1">
    <property type="nucleotide sequence ID" value="NZ_WBME01000010.1"/>
</dbReference>
<dbReference type="SMR" id="Q8CRT9"/>
<dbReference type="KEGG" id="sep:SE_1590"/>
<dbReference type="PATRIC" id="fig|176280.10.peg.1554"/>
<dbReference type="eggNOG" id="COG0210">
    <property type="taxonomic scope" value="Bacteria"/>
</dbReference>
<dbReference type="HOGENOM" id="CLU_004585_5_2_9"/>
<dbReference type="OrthoDB" id="9810135at2"/>
<dbReference type="Proteomes" id="UP000001411">
    <property type="component" value="Chromosome"/>
</dbReference>
<dbReference type="GO" id="GO:0005829">
    <property type="term" value="C:cytosol"/>
    <property type="evidence" value="ECO:0007669"/>
    <property type="project" value="TreeGrafter"/>
</dbReference>
<dbReference type="GO" id="GO:0033202">
    <property type="term" value="C:DNA helicase complex"/>
    <property type="evidence" value="ECO:0007669"/>
    <property type="project" value="TreeGrafter"/>
</dbReference>
<dbReference type="GO" id="GO:0043138">
    <property type="term" value="F:3'-5' DNA helicase activity"/>
    <property type="evidence" value="ECO:0007669"/>
    <property type="project" value="TreeGrafter"/>
</dbReference>
<dbReference type="GO" id="GO:0005524">
    <property type="term" value="F:ATP binding"/>
    <property type="evidence" value="ECO:0007669"/>
    <property type="project" value="UniProtKB-KW"/>
</dbReference>
<dbReference type="GO" id="GO:0016887">
    <property type="term" value="F:ATP hydrolysis activity"/>
    <property type="evidence" value="ECO:0007669"/>
    <property type="project" value="RHEA"/>
</dbReference>
<dbReference type="GO" id="GO:0003677">
    <property type="term" value="F:DNA binding"/>
    <property type="evidence" value="ECO:0007669"/>
    <property type="project" value="UniProtKB-KW"/>
</dbReference>
<dbReference type="GO" id="GO:0006260">
    <property type="term" value="P:DNA replication"/>
    <property type="evidence" value="ECO:0007669"/>
    <property type="project" value="InterPro"/>
</dbReference>
<dbReference type="GO" id="GO:0000725">
    <property type="term" value="P:recombinational repair"/>
    <property type="evidence" value="ECO:0007669"/>
    <property type="project" value="TreeGrafter"/>
</dbReference>
<dbReference type="CDD" id="cd17932">
    <property type="entry name" value="DEXQc_UvrD"/>
    <property type="match status" value="1"/>
</dbReference>
<dbReference type="CDD" id="cd18807">
    <property type="entry name" value="SF1_C_UvrD"/>
    <property type="match status" value="1"/>
</dbReference>
<dbReference type="FunFam" id="1.10.10.160:FF:000001">
    <property type="entry name" value="ATP-dependent DNA helicase"/>
    <property type="match status" value="1"/>
</dbReference>
<dbReference type="FunFam" id="1.10.486.10:FF:000003">
    <property type="entry name" value="ATP-dependent DNA helicase"/>
    <property type="match status" value="1"/>
</dbReference>
<dbReference type="Gene3D" id="1.10.10.160">
    <property type="match status" value="1"/>
</dbReference>
<dbReference type="Gene3D" id="3.40.50.300">
    <property type="entry name" value="P-loop containing nucleotide triphosphate hydrolases"/>
    <property type="match status" value="2"/>
</dbReference>
<dbReference type="Gene3D" id="1.10.486.10">
    <property type="entry name" value="PCRA, domain 4"/>
    <property type="match status" value="1"/>
</dbReference>
<dbReference type="InterPro" id="IPR005751">
    <property type="entry name" value="ATP-dep_DNA_helicase_PcrA"/>
</dbReference>
<dbReference type="InterPro" id="IPR013986">
    <property type="entry name" value="DExx_box_DNA_helicase_dom_sf"/>
</dbReference>
<dbReference type="InterPro" id="IPR014017">
    <property type="entry name" value="DNA_helicase_UvrD-like_C"/>
</dbReference>
<dbReference type="InterPro" id="IPR000212">
    <property type="entry name" value="DNA_helicase_UvrD/REP"/>
</dbReference>
<dbReference type="InterPro" id="IPR027417">
    <property type="entry name" value="P-loop_NTPase"/>
</dbReference>
<dbReference type="InterPro" id="IPR014016">
    <property type="entry name" value="UvrD-like_ATP-bd"/>
</dbReference>
<dbReference type="NCBIfam" id="TIGR01073">
    <property type="entry name" value="pcrA"/>
    <property type="match status" value="1"/>
</dbReference>
<dbReference type="PANTHER" id="PTHR11070:SF2">
    <property type="entry name" value="ATP-DEPENDENT DNA HELICASE SRS2"/>
    <property type="match status" value="1"/>
</dbReference>
<dbReference type="PANTHER" id="PTHR11070">
    <property type="entry name" value="UVRD / RECB / PCRA DNA HELICASE FAMILY MEMBER"/>
    <property type="match status" value="1"/>
</dbReference>
<dbReference type="Pfam" id="PF21196">
    <property type="entry name" value="PcrA_UvrD_tudor"/>
    <property type="match status" value="1"/>
</dbReference>
<dbReference type="Pfam" id="PF00580">
    <property type="entry name" value="UvrD-helicase"/>
    <property type="match status" value="1"/>
</dbReference>
<dbReference type="Pfam" id="PF13361">
    <property type="entry name" value="UvrD_C"/>
    <property type="match status" value="1"/>
</dbReference>
<dbReference type="SUPFAM" id="SSF52540">
    <property type="entry name" value="P-loop containing nucleoside triphosphate hydrolases"/>
    <property type="match status" value="1"/>
</dbReference>
<dbReference type="PROSITE" id="PS51198">
    <property type="entry name" value="UVRD_HELICASE_ATP_BIND"/>
    <property type="match status" value="1"/>
</dbReference>
<dbReference type="PROSITE" id="PS51217">
    <property type="entry name" value="UVRD_HELICASE_CTER"/>
    <property type="match status" value="1"/>
</dbReference>